<name>KRCC1_MOUSE</name>
<organism>
    <name type="scientific">Mus musculus</name>
    <name type="common">Mouse</name>
    <dbReference type="NCBI Taxonomy" id="10090"/>
    <lineage>
        <taxon>Eukaryota</taxon>
        <taxon>Metazoa</taxon>
        <taxon>Chordata</taxon>
        <taxon>Craniata</taxon>
        <taxon>Vertebrata</taxon>
        <taxon>Euteleostomi</taxon>
        <taxon>Mammalia</taxon>
        <taxon>Eutheria</taxon>
        <taxon>Euarchontoglires</taxon>
        <taxon>Glires</taxon>
        <taxon>Rodentia</taxon>
        <taxon>Myomorpha</taxon>
        <taxon>Muroidea</taxon>
        <taxon>Muridae</taxon>
        <taxon>Murinae</taxon>
        <taxon>Mus</taxon>
        <taxon>Mus</taxon>
    </lineage>
</organism>
<reference key="1">
    <citation type="journal article" date="2005" name="Science">
        <title>The transcriptional landscape of the mammalian genome.</title>
        <authorList>
            <person name="Carninci P."/>
            <person name="Kasukawa T."/>
            <person name="Katayama S."/>
            <person name="Gough J."/>
            <person name="Frith M.C."/>
            <person name="Maeda N."/>
            <person name="Oyama R."/>
            <person name="Ravasi T."/>
            <person name="Lenhard B."/>
            <person name="Wells C."/>
            <person name="Kodzius R."/>
            <person name="Shimokawa K."/>
            <person name="Bajic V.B."/>
            <person name="Brenner S.E."/>
            <person name="Batalov S."/>
            <person name="Forrest A.R."/>
            <person name="Zavolan M."/>
            <person name="Davis M.J."/>
            <person name="Wilming L.G."/>
            <person name="Aidinis V."/>
            <person name="Allen J.E."/>
            <person name="Ambesi-Impiombato A."/>
            <person name="Apweiler R."/>
            <person name="Aturaliya R.N."/>
            <person name="Bailey T.L."/>
            <person name="Bansal M."/>
            <person name="Baxter L."/>
            <person name="Beisel K.W."/>
            <person name="Bersano T."/>
            <person name="Bono H."/>
            <person name="Chalk A.M."/>
            <person name="Chiu K.P."/>
            <person name="Choudhary V."/>
            <person name="Christoffels A."/>
            <person name="Clutterbuck D.R."/>
            <person name="Crowe M.L."/>
            <person name="Dalla E."/>
            <person name="Dalrymple B.P."/>
            <person name="de Bono B."/>
            <person name="Della Gatta G."/>
            <person name="di Bernardo D."/>
            <person name="Down T."/>
            <person name="Engstrom P."/>
            <person name="Fagiolini M."/>
            <person name="Faulkner G."/>
            <person name="Fletcher C.F."/>
            <person name="Fukushima T."/>
            <person name="Furuno M."/>
            <person name="Futaki S."/>
            <person name="Gariboldi M."/>
            <person name="Georgii-Hemming P."/>
            <person name="Gingeras T.R."/>
            <person name="Gojobori T."/>
            <person name="Green R.E."/>
            <person name="Gustincich S."/>
            <person name="Harbers M."/>
            <person name="Hayashi Y."/>
            <person name="Hensch T.K."/>
            <person name="Hirokawa N."/>
            <person name="Hill D."/>
            <person name="Huminiecki L."/>
            <person name="Iacono M."/>
            <person name="Ikeo K."/>
            <person name="Iwama A."/>
            <person name="Ishikawa T."/>
            <person name="Jakt M."/>
            <person name="Kanapin A."/>
            <person name="Katoh M."/>
            <person name="Kawasawa Y."/>
            <person name="Kelso J."/>
            <person name="Kitamura H."/>
            <person name="Kitano H."/>
            <person name="Kollias G."/>
            <person name="Krishnan S.P."/>
            <person name="Kruger A."/>
            <person name="Kummerfeld S.K."/>
            <person name="Kurochkin I.V."/>
            <person name="Lareau L.F."/>
            <person name="Lazarevic D."/>
            <person name="Lipovich L."/>
            <person name="Liu J."/>
            <person name="Liuni S."/>
            <person name="McWilliam S."/>
            <person name="Madan Babu M."/>
            <person name="Madera M."/>
            <person name="Marchionni L."/>
            <person name="Matsuda H."/>
            <person name="Matsuzawa S."/>
            <person name="Miki H."/>
            <person name="Mignone F."/>
            <person name="Miyake S."/>
            <person name="Morris K."/>
            <person name="Mottagui-Tabar S."/>
            <person name="Mulder N."/>
            <person name="Nakano N."/>
            <person name="Nakauchi H."/>
            <person name="Ng P."/>
            <person name="Nilsson R."/>
            <person name="Nishiguchi S."/>
            <person name="Nishikawa S."/>
            <person name="Nori F."/>
            <person name="Ohara O."/>
            <person name="Okazaki Y."/>
            <person name="Orlando V."/>
            <person name="Pang K.C."/>
            <person name="Pavan W.J."/>
            <person name="Pavesi G."/>
            <person name="Pesole G."/>
            <person name="Petrovsky N."/>
            <person name="Piazza S."/>
            <person name="Reed J."/>
            <person name="Reid J.F."/>
            <person name="Ring B.Z."/>
            <person name="Ringwald M."/>
            <person name="Rost B."/>
            <person name="Ruan Y."/>
            <person name="Salzberg S.L."/>
            <person name="Sandelin A."/>
            <person name="Schneider C."/>
            <person name="Schoenbach C."/>
            <person name="Sekiguchi K."/>
            <person name="Semple C.A."/>
            <person name="Seno S."/>
            <person name="Sessa L."/>
            <person name="Sheng Y."/>
            <person name="Shibata Y."/>
            <person name="Shimada H."/>
            <person name="Shimada K."/>
            <person name="Silva D."/>
            <person name="Sinclair B."/>
            <person name="Sperling S."/>
            <person name="Stupka E."/>
            <person name="Sugiura K."/>
            <person name="Sultana R."/>
            <person name="Takenaka Y."/>
            <person name="Taki K."/>
            <person name="Tammoja K."/>
            <person name="Tan S.L."/>
            <person name="Tang S."/>
            <person name="Taylor M.S."/>
            <person name="Tegner J."/>
            <person name="Teichmann S.A."/>
            <person name="Ueda H.R."/>
            <person name="van Nimwegen E."/>
            <person name="Verardo R."/>
            <person name="Wei C.L."/>
            <person name="Yagi K."/>
            <person name="Yamanishi H."/>
            <person name="Zabarovsky E."/>
            <person name="Zhu S."/>
            <person name="Zimmer A."/>
            <person name="Hide W."/>
            <person name="Bult C."/>
            <person name="Grimmond S.M."/>
            <person name="Teasdale R.D."/>
            <person name="Liu E.T."/>
            <person name="Brusic V."/>
            <person name="Quackenbush J."/>
            <person name="Wahlestedt C."/>
            <person name="Mattick J.S."/>
            <person name="Hume D.A."/>
            <person name="Kai C."/>
            <person name="Sasaki D."/>
            <person name="Tomaru Y."/>
            <person name="Fukuda S."/>
            <person name="Kanamori-Katayama M."/>
            <person name="Suzuki M."/>
            <person name="Aoki J."/>
            <person name="Arakawa T."/>
            <person name="Iida J."/>
            <person name="Imamura K."/>
            <person name="Itoh M."/>
            <person name="Kato T."/>
            <person name="Kawaji H."/>
            <person name="Kawagashira N."/>
            <person name="Kawashima T."/>
            <person name="Kojima M."/>
            <person name="Kondo S."/>
            <person name="Konno H."/>
            <person name="Nakano K."/>
            <person name="Ninomiya N."/>
            <person name="Nishio T."/>
            <person name="Okada M."/>
            <person name="Plessy C."/>
            <person name="Shibata K."/>
            <person name="Shiraki T."/>
            <person name="Suzuki S."/>
            <person name="Tagami M."/>
            <person name="Waki K."/>
            <person name="Watahiki A."/>
            <person name="Okamura-Oho Y."/>
            <person name="Suzuki H."/>
            <person name="Kawai J."/>
            <person name="Hayashizaki Y."/>
        </authorList>
    </citation>
    <scope>NUCLEOTIDE SEQUENCE [LARGE SCALE MRNA]</scope>
    <source>
        <strain>C57BL/6J</strain>
        <tissue>Amnion</tissue>
        <tissue>Vagina</tissue>
    </source>
</reference>
<reference key="2">
    <citation type="journal article" date="2004" name="Genome Res.">
        <title>The status, quality, and expansion of the NIH full-length cDNA project: the Mammalian Gene Collection (MGC).</title>
        <authorList>
            <consortium name="The MGC Project Team"/>
        </authorList>
    </citation>
    <scope>NUCLEOTIDE SEQUENCE [LARGE SCALE MRNA]</scope>
    <source>
        <strain>C57BL/6J</strain>
        <strain>FVB/N</strain>
        <tissue>Brain</tissue>
        <tissue>Mammary tumor</tissue>
        <tissue>Olfactory epithelium</tissue>
    </source>
</reference>
<protein>
    <recommendedName>
        <fullName>Lysine-rich coiled-coil protein 1</fullName>
    </recommendedName>
</protein>
<dbReference type="EMBL" id="AK146818">
    <property type="protein sequence ID" value="BAE27457.1"/>
    <property type="molecule type" value="mRNA"/>
</dbReference>
<dbReference type="EMBL" id="AK162678">
    <property type="protein sequence ID" value="BAE37018.1"/>
    <property type="molecule type" value="mRNA"/>
</dbReference>
<dbReference type="EMBL" id="BC005704">
    <property type="protein sequence ID" value="AAH05704.1"/>
    <property type="molecule type" value="mRNA"/>
</dbReference>
<dbReference type="EMBL" id="BC046798">
    <property type="protein sequence ID" value="AAH46798.1"/>
    <property type="molecule type" value="mRNA"/>
</dbReference>
<dbReference type="EMBL" id="BC069863">
    <property type="protein sequence ID" value="AAH69863.1"/>
    <property type="molecule type" value="mRNA"/>
</dbReference>
<dbReference type="CCDS" id="CCDS20228.1"/>
<dbReference type="RefSeq" id="NP_001341635.1">
    <property type="nucleotide sequence ID" value="NM_001354706.1"/>
</dbReference>
<dbReference type="RefSeq" id="NP_663543.1">
    <property type="nucleotide sequence ID" value="NM_145568.4"/>
</dbReference>
<dbReference type="RefSeq" id="XP_006506492.1">
    <property type="nucleotide sequence ID" value="XM_006506429.3"/>
</dbReference>
<dbReference type="FunCoup" id="Q99JT5">
    <property type="interactions" value="14"/>
</dbReference>
<dbReference type="STRING" id="10090.ENSMUSP00000130252"/>
<dbReference type="iPTMnet" id="Q99JT5"/>
<dbReference type="PhosphoSitePlus" id="Q99JT5"/>
<dbReference type="PaxDb" id="10090-ENSMUSP00000130252"/>
<dbReference type="ProteomicsDB" id="265027"/>
<dbReference type="Antibodypedia" id="47497">
    <property type="antibodies" value="98 antibodies from 16 providers"/>
</dbReference>
<dbReference type="DNASU" id="57896"/>
<dbReference type="Ensembl" id="ENSMUST00000080949.8">
    <property type="protein sequence ID" value="ENSMUSP00000079748.8"/>
    <property type="gene ID" value="ENSMUSG00000053012.18"/>
</dbReference>
<dbReference type="Ensembl" id="ENSMUST00000168700.7">
    <property type="protein sequence ID" value="ENSMUSP00000130252.2"/>
    <property type="gene ID" value="ENSMUSG00000053012.18"/>
</dbReference>
<dbReference type="Ensembl" id="ENSMUST00000204436.3">
    <property type="protein sequence ID" value="ENSMUSP00000145416.2"/>
    <property type="gene ID" value="ENSMUSG00000053012.18"/>
</dbReference>
<dbReference type="GeneID" id="57896"/>
<dbReference type="KEGG" id="mmu:57896"/>
<dbReference type="UCSC" id="uc009cgm.1">
    <property type="organism name" value="mouse"/>
</dbReference>
<dbReference type="AGR" id="MGI:1889377"/>
<dbReference type="CTD" id="51315"/>
<dbReference type="MGI" id="MGI:1889377">
    <property type="gene designation" value="Krcc1"/>
</dbReference>
<dbReference type="VEuPathDB" id="HostDB:ENSMUSG00000053012"/>
<dbReference type="eggNOG" id="ENOG502RTYF">
    <property type="taxonomic scope" value="Eukaryota"/>
</dbReference>
<dbReference type="GeneTree" id="ENSGT00940000162565"/>
<dbReference type="HOGENOM" id="CLU_032533_0_0_1"/>
<dbReference type="InParanoid" id="Q99JT5"/>
<dbReference type="OMA" id="ASHKQTH"/>
<dbReference type="OrthoDB" id="9747435at2759"/>
<dbReference type="PhylomeDB" id="Q99JT5"/>
<dbReference type="BioGRID-ORCS" id="57896">
    <property type="hits" value="1 hit in 76 CRISPR screens"/>
</dbReference>
<dbReference type="ChiTaRS" id="Krcc1">
    <property type="organism name" value="mouse"/>
</dbReference>
<dbReference type="PRO" id="PR:Q99JT5"/>
<dbReference type="Proteomes" id="UP000000589">
    <property type="component" value="Chromosome 6"/>
</dbReference>
<dbReference type="RNAct" id="Q99JT5">
    <property type="molecule type" value="protein"/>
</dbReference>
<dbReference type="Bgee" id="ENSMUSG00000053012">
    <property type="expression patterns" value="Expressed in embryonic post-anal tail and 242 other cell types or tissues"/>
</dbReference>
<dbReference type="ExpressionAtlas" id="Q99JT5">
    <property type="expression patterns" value="baseline and differential"/>
</dbReference>
<dbReference type="PANTHER" id="PTHR46742">
    <property type="entry name" value="LYSINE-RICH COILED-COIL PROTEIN 1"/>
    <property type="match status" value="1"/>
</dbReference>
<dbReference type="PANTHER" id="PTHR46742:SF3">
    <property type="entry name" value="LYSINE-RICH COILED-COIL PROTEIN 1"/>
    <property type="match status" value="1"/>
</dbReference>
<proteinExistence type="evidence at transcript level"/>
<feature type="chain" id="PRO_0000306397" description="Lysine-rich coiled-coil protein 1">
    <location>
        <begin position="1"/>
        <end position="256"/>
    </location>
</feature>
<feature type="region of interest" description="Disordered" evidence="2">
    <location>
        <begin position="62"/>
        <end position="84"/>
    </location>
</feature>
<feature type="region of interest" description="Disordered" evidence="2">
    <location>
        <begin position="144"/>
        <end position="256"/>
    </location>
</feature>
<feature type="coiled-coil region" evidence="1">
    <location>
        <begin position="209"/>
        <end position="247"/>
    </location>
</feature>
<feature type="compositionally biased region" description="Polar residues" evidence="2">
    <location>
        <begin position="64"/>
        <end position="79"/>
    </location>
</feature>
<feature type="compositionally biased region" description="Basic and acidic residues" evidence="2">
    <location>
        <begin position="161"/>
        <end position="188"/>
    </location>
</feature>
<feature type="compositionally biased region" description="Basic and acidic residues" evidence="2">
    <location>
        <begin position="218"/>
        <end position="227"/>
    </location>
</feature>
<gene>
    <name type="primary">Krcc1</name>
</gene>
<keyword id="KW-0175">Coiled coil</keyword>
<keyword id="KW-1185">Reference proteome</keyword>
<sequence length="256" mass="30718">MKHSNKPYDSFQDELEDYIKVQKARGLEPKTCFRRMRGEYLESCGYREEFDSRPRYRMFDQRLPSGTNHSYPRSCSSSQTEDRVPQWLPAHDKIRLNSLSYCQFTRDGFSEKPVPLNLSQQEYNCGSYSVESVVHKRLCSEHSTIDPQVSHRQMHQKRKKHVEEGREKQEERPKHERKRSSEEMDLNKHRSIQRKKTKAETETVQDGTEKLKNRKEKKTRDVSSKKEDRKRRKEKKEQGEERTEEEMLWDQSILGF</sequence>
<evidence type="ECO:0000255" key="1"/>
<evidence type="ECO:0000256" key="2">
    <source>
        <dbReference type="SAM" id="MobiDB-lite"/>
    </source>
</evidence>
<accession>Q99JT5</accession>